<organism>
    <name type="scientific">Dendroaspis angusticeps</name>
    <name type="common">Eastern green mamba</name>
    <name type="synonym">Naja angusticeps</name>
    <dbReference type="NCBI Taxonomy" id="8618"/>
    <lineage>
        <taxon>Eukaryota</taxon>
        <taxon>Metazoa</taxon>
        <taxon>Chordata</taxon>
        <taxon>Craniata</taxon>
        <taxon>Vertebrata</taxon>
        <taxon>Euteleostomi</taxon>
        <taxon>Lepidosauria</taxon>
        <taxon>Squamata</taxon>
        <taxon>Bifurcata</taxon>
        <taxon>Unidentata</taxon>
        <taxon>Episquamata</taxon>
        <taxon>Toxicofera</taxon>
        <taxon>Serpentes</taxon>
        <taxon>Colubroidea</taxon>
        <taxon>Elapidae</taxon>
        <taxon>Elapinae</taxon>
        <taxon>Dendroaspis</taxon>
    </lineage>
</organism>
<protein>
    <recommendedName>
        <fullName>Muscarinic toxin 4</fullName>
        <shortName>MT4</shortName>
    </recommendedName>
</protein>
<comment type="function">
    <text evidence="3">Binds to the muscarinic acetylcholine receptor (CHRM).</text>
</comment>
<comment type="subunit">
    <text evidence="1">Monomer.</text>
</comment>
<comment type="subcellular location">
    <subcellularLocation>
        <location evidence="3">Secreted</location>
    </subcellularLocation>
</comment>
<comment type="tissue specificity">
    <text evidence="4">Expressed by the venom gland.</text>
</comment>
<comment type="mass spectrometry"/>
<comment type="miscellaneous">
    <text evidence="4">Is classified as a P-type cytotoxin, since a proline residue stands at position 33 (Pro-31 in standard classification).</text>
</comment>
<comment type="similarity">
    <text evidence="4">Belongs to the three-finger toxin family. Short-chain subfamily. Aminergic toxin sub-subfamily.</text>
</comment>
<name>3SIM4_DENAN</name>
<feature type="chain" id="PRO_0000093643" description="Muscarinic toxin 4" evidence="3">
    <location>
        <begin position="1"/>
        <end position="66"/>
    </location>
</feature>
<feature type="disulfide bond" evidence="2">
    <location>
        <begin position="3"/>
        <end position="24"/>
    </location>
</feature>
<feature type="disulfide bond" evidence="2">
    <location>
        <begin position="17"/>
        <end position="42"/>
    </location>
</feature>
<feature type="disulfide bond" evidence="2">
    <location>
        <begin position="46"/>
        <end position="58"/>
    </location>
</feature>
<feature type="disulfide bond" evidence="2">
    <location>
        <begin position="59"/>
        <end position="64"/>
    </location>
</feature>
<evidence type="ECO:0000250" key="1"/>
<evidence type="ECO:0000250" key="2">
    <source>
        <dbReference type="UniProtKB" id="P60301"/>
    </source>
</evidence>
<evidence type="ECO:0000269" key="3">
    <source>
    </source>
</evidence>
<evidence type="ECO:0000305" key="4"/>
<accession>Q9PSN1</accession>
<sequence>LTCVTSKSIFGITTENCPDGQNLCFKKWYYIVPRYSDITWGCAATCPKPTNVRETIHCCETDKCNE</sequence>
<proteinExistence type="evidence at protein level"/>
<reference key="1">
    <citation type="journal article" date="1995" name="Toxicon">
        <title>Purification and sequence determination of a new muscarinic toxin (MT4) from the venom of the green mamba (Dendroaspis angusticeps).</title>
        <authorList>
            <person name="Vandermeers A."/>
            <person name="Vandermeers-Piret M.-C."/>
            <person name="Rathe J."/>
            <person name="Waelbroeck M."/>
            <person name="Jolkkonen M."/>
            <person name="Oras A."/>
            <person name="Karlsson E."/>
        </authorList>
    </citation>
    <scope>PROTEIN SEQUENCE</scope>
    <scope>FUNCTION</scope>
    <scope>MASS SPECTROMETRY</scope>
    <scope>SUBCELLULAR LOCATION</scope>
    <source>
        <tissue>Venom</tissue>
    </source>
</reference>
<keyword id="KW-0903">Direct protein sequencing</keyword>
<keyword id="KW-1015">Disulfide bond</keyword>
<keyword id="KW-1214">G-protein coupled acetylcholine receptor impairing toxin</keyword>
<keyword id="KW-1213">G-protein coupled receptor impairing toxin</keyword>
<keyword id="KW-0528">Neurotoxin</keyword>
<keyword id="KW-0629">Postsynaptic neurotoxin</keyword>
<keyword id="KW-0964">Secreted</keyword>
<keyword id="KW-0800">Toxin</keyword>
<dbReference type="SMR" id="Q9PSN1"/>
<dbReference type="GO" id="GO:0005576">
    <property type="term" value="C:extracellular region"/>
    <property type="evidence" value="ECO:0007669"/>
    <property type="project" value="UniProtKB-SubCell"/>
</dbReference>
<dbReference type="GO" id="GO:0090729">
    <property type="term" value="F:toxin activity"/>
    <property type="evidence" value="ECO:0007669"/>
    <property type="project" value="UniProtKB-KW"/>
</dbReference>
<dbReference type="CDD" id="cd00206">
    <property type="entry name" value="TFP_snake_toxin"/>
    <property type="match status" value="1"/>
</dbReference>
<dbReference type="FunFam" id="2.10.60.10:FF:000024">
    <property type="entry name" value="Cytotoxin 1"/>
    <property type="match status" value="1"/>
</dbReference>
<dbReference type="Gene3D" id="2.10.60.10">
    <property type="entry name" value="CD59"/>
    <property type="match status" value="1"/>
</dbReference>
<dbReference type="InterPro" id="IPR003571">
    <property type="entry name" value="Snake_3FTx"/>
</dbReference>
<dbReference type="InterPro" id="IPR045860">
    <property type="entry name" value="Snake_toxin-like_sf"/>
</dbReference>
<dbReference type="InterPro" id="IPR018354">
    <property type="entry name" value="Snake_toxin_con_site"/>
</dbReference>
<dbReference type="InterPro" id="IPR054131">
    <property type="entry name" value="Toxin_cobra-type"/>
</dbReference>
<dbReference type="Pfam" id="PF21947">
    <property type="entry name" value="Toxin_cobra-type"/>
    <property type="match status" value="1"/>
</dbReference>
<dbReference type="SUPFAM" id="SSF57302">
    <property type="entry name" value="Snake toxin-like"/>
    <property type="match status" value="1"/>
</dbReference>
<dbReference type="PROSITE" id="PS00272">
    <property type="entry name" value="SNAKE_TOXIN"/>
    <property type="match status" value="1"/>
</dbReference>